<organism>
    <name type="scientific">Methanothrix thermoacetophila (strain DSM 6194 / JCM 14653 / NBRC 101360 / PT)</name>
    <name type="common">Methanosaeta thermophila</name>
    <dbReference type="NCBI Taxonomy" id="349307"/>
    <lineage>
        <taxon>Archaea</taxon>
        <taxon>Methanobacteriati</taxon>
        <taxon>Methanobacteriota</taxon>
        <taxon>Stenosarchaea group</taxon>
        <taxon>Methanomicrobia</taxon>
        <taxon>Methanotrichales</taxon>
        <taxon>Methanotrichaceae</taxon>
        <taxon>Methanothrix</taxon>
    </lineage>
</organism>
<feature type="chain" id="PRO_1000017746" description="Small ribosomal subunit protein eS24">
    <location>
        <begin position="1"/>
        <end position="99"/>
    </location>
</feature>
<protein>
    <recommendedName>
        <fullName evidence="1">Small ribosomal subunit protein eS24</fullName>
    </recommendedName>
    <alternativeName>
        <fullName evidence="2">30S ribosomal protein S24e</fullName>
    </alternativeName>
</protein>
<keyword id="KW-1185">Reference proteome</keyword>
<keyword id="KW-0687">Ribonucleoprotein</keyword>
<keyword id="KW-0689">Ribosomal protein</keyword>
<reference key="1">
    <citation type="submission" date="2006-10" db="EMBL/GenBank/DDBJ databases">
        <title>Complete sequence of Methanosaeta thermophila PT.</title>
        <authorList>
            <consortium name="US DOE Joint Genome Institute"/>
            <person name="Copeland A."/>
            <person name="Lucas S."/>
            <person name="Lapidus A."/>
            <person name="Barry K."/>
            <person name="Detter J.C."/>
            <person name="Glavina del Rio T."/>
            <person name="Hammon N."/>
            <person name="Israni S."/>
            <person name="Pitluck S."/>
            <person name="Chain P."/>
            <person name="Malfatti S."/>
            <person name="Shin M."/>
            <person name="Vergez L."/>
            <person name="Schmutz J."/>
            <person name="Larimer F."/>
            <person name="Land M."/>
            <person name="Hauser L."/>
            <person name="Kyrpides N."/>
            <person name="Kim E."/>
            <person name="Smith K.S."/>
            <person name="Ingram-Smith C."/>
            <person name="Richardson P."/>
        </authorList>
    </citation>
    <scope>NUCLEOTIDE SEQUENCE [LARGE SCALE GENOMIC DNA]</scope>
    <source>
        <strain>DSM 6194 / JCM 14653 / NBRC 101360 / PT</strain>
    </source>
</reference>
<accession>A0B8S8</accession>
<gene>
    <name evidence="1" type="primary">rps24e</name>
    <name type="ordered locus">Mthe_1324</name>
</gene>
<name>RS24_METTP</name>
<sequence length="99" mass="11458">MDIEIVSERENPLLKRREIVLKVIHGEGPTPTRKSVVERLAAIKDSKPGLVVVRKMNSLFGRRESIAHARIYESEERMRQVENPHIVKRNVFTEQKEAS</sequence>
<dbReference type="EMBL" id="CP000477">
    <property type="protein sequence ID" value="ABK15102.1"/>
    <property type="molecule type" value="Genomic_DNA"/>
</dbReference>
<dbReference type="RefSeq" id="WP_011696494.1">
    <property type="nucleotide sequence ID" value="NC_008553.1"/>
</dbReference>
<dbReference type="SMR" id="A0B8S8"/>
<dbReference type="STRING" id="349307.Mthe_1324"/>
<dbReference type="GeneID" id="4462131"/>
<dbReference type="KEGG" id="mtp:Mthe_1324"/>
<dbReference type="HOGENOM" id="CLU_107248_3_1_2"/>
<dbReference type="OrthoDB" id="27533at2157"/>
<dbReference type="Proteomes" id="UP000000674">
    <property type="component" value="Chromosome"/>
</dbReference>
<dbReference type="GO" id="GO:1990904">
    <property type="term" value="C:ribonucleoprotein complex"/>
    <property type="evidence" value="ECO:0007669"/>
    <property type="project" value="UniProtKB-KW"/>
</dbReference>
<dbReference type="GO" id="GO:0005840">
    <property type="term" value="C:ribosome"/>
    <property type="evidence" value="ECO:0007669"/>
    <property type="project" value="UniProtKB-KW"/>
</dbReference>
<dbReference type="GO" id="GO:0003735">
    <property type="term" value="F:structural constituent of ribosome"/>
    <property type="evidence" value="ECO:0007669"/>
    <property type="project" value="InterPro"/>
</dbReference>
<dbReference type="GO" id="GO:0006412">
    <property type="term" value="P:translation"/>
    <property type="evidence" value="ECO:0007669"/>
    <property type="project" value="UniProtKB-UniRule"/>
</dbReference>
<dbReference type="Gene3D" id="3.30.70.330">
    <property type="match status" value="1"/>
</dbReference>
<dbReference type="HAMAP" id="MF_00545">
    <property type="entry name" value="Ribosomal_eS24"/>
    <property type="match status" value="1"/>
</dbReference>
<dbReference type="InterPro" id="IPR012677">
    <property type="entry name" value="Nucleotide-bd_a/b_plait_sf"/>
</dbReference>
<dbReference type="InterPro" id="IPR001976">
    <property type="entry name" value="Ribosomal_eS24"/>
</dbReference>
<dbReference type="InterPro" id="IPR012678">
    <property type="entry name" value="Ribosomal_uL23/eL15/eS24_sf"/>
</dbReference>
<dbReference type="PANTHER" id="PTHR10496">
    <property type="entry name" value="40S RIBOSOMAL PROTEIN S24"/>
    <property type="match status" value="1"/>
</dbReference>
<dbReference type="Pfam" id="PF01282">
    <property type="entry name" value="Ribosomal_S24e"/>
    <property type="match status" value="1"/>
</dbReference>
<dbReference type="SUPFAM" id="SSF54189">
    <property type="entry name" value="Ribosomal proteins S24e, L23 and L15e"/>
    <property type="match status" value="1"/>
</dbReference>
<evidence type="ECO:0000255" key="1">
    <source>
        <dbReference type="HAMAP-Rule" id="MF_00545"/>
    </source>
</evidence>
<evidence type="ECO:0000305" key="2"/>
<proteinExistence type="inferred from homology"/>
<comment type="similarity">
    <text evidence="1">Belongs to the eukaryotic ribosomal protein eS24 family.</text>
</comment>